<feature type="chain" id="PRO_0000375978" description="Transcription factor Sox-18A">
    <location>
        <begin position="1"/>
        <end position="363"/>
    </location>
</feature>
<feature type="domain" description="Sox C-terminal" evidence="5">
    <location>
        <begin position="236"/>
        <end position="362"/>
    </location>
</feature>
<feature type="DNA-binding region" description="HMG box" evidence="4">
    <location>
        <begin position="68"/>
        <end position="136"/>
    </location>
</feature>
<feature type="region of interest" description="Disordered" evidence="6">
    <location>
        <begin position="20"/>
        <end position="66"/>
    </location>
</feature>
<feature type="region of interest" description="Interaction with DNA" evidence="2">
    <location>
        <begin position="70"/>
        <end position="83"/>
    </location>
</feature>
<feature type="region of interest" description="Interaction with DNA" evidence="2">
    <location>
        <begin position="94"/>
        <end position="106"/>
    </location>
</feature>
<feature type="region of interest" description="Disordered" evidence="6">
    <location>
        <begin position="129"/>
        <end position="163"/>
    </location>
</feature>
<feature type="region of interest" description="Important for transcriptional activation" evidence="2">
    <location>
        <begin position="149"/>
        <end position="210"/>
    </location>
</feature>
<feature type="short sequence motif" description="9aaTAD" evidence="1">
    <location>
        <begin position="308"/>
        <end position="316"/>
    </location>
</feature>
<feature type="compositionally biased region" description="Pro residues" evidence="6">
    <location>
        <begin position="38"/>
        <end position="51"/>
    </location>
</feature>
<feature type="compositionally biased region" description="Basic residues" evidence="6">
    <location>
        <begin position="135"/>
        <end position="149"/>
    </location>
</feature>
<evidence type="ECO:0000250" key="1">
    <source>
        <dbReference type="UniProtKB" id="P35713"/>
    </source>
</evidence>
<evidence type="ECO:0000250" key="2">
    <source>
        <dbReference type="UniProtKB" id="P43680"/>
    </source>
</evidence>
<evidence type="ECO:0000255" key="3"/>
<evidence type="ECO:0000255" key="4">
    <source>
        <dbReference type="PROSITE-ProRule" id="PRU00267"/>
    </source>
</evidence>
<evidence type="ECO:0000255" key="5">
    <source>
        <dbReference type="PROSITE-ProRule" id="PRU00849"/>
    </source>
</evidence>
<evidence type="ECO:0000256" key="6">
    <source>
        <dbReference type="SAM" id="MobiDB-lite"/>
    </source>
</evidence>
<evidence type="ECO:0000269" key="7">
    <source>
    </source>
</evidence>
<evidence type="ECO:0000303" key="8">
    <source>
    </source>
</evidence>
<evidence type="ECO:0000305" key="9"/>
<evidence type="ECO:0000312" key="10">
    <source>
        <dbReference type="EMBL" id="AAI69575.1"/>
    </source>
</evidence>
<evidence type="ECO:0000312" key="11">
    <source>
        <dbReference type="EMBL" id="BAB60829.1"/>
    </source>
</evidence>
<reference evidence="9 11" key="1">
    <citation type="journal article" date="2002" name="Gene">
        <title>Expression and characterization of Xenopus laevis SRY-related cDNAs, xSox17alpha1, xSox17alpha2, xSox18alpha and xSox18beta.</title>
        <authorList>
            <person name="Hasegawa M."/>
            <person name="Hiraoka Y."/>
            <person name="Hagiuda J."/>
            <person name="Ogawa M."/>
            <person name="Aiso S."/>
        </authorList>
    </citation>
    <scope>NUCLEOTIDE SEQUENCE [MRNA]</scope>
    <scope>DNA-BINDING</scope>
    <scope>TISSUE SPECIFICITY</scope>
    <scope>DEVELOPMENTAL STAGE</scope>
</reference>
<reference evidence="10" key="2">
    <citation type="submission" date="2008-11" db="EMBL/GenBank/DDBJ databases">
        <authorList>
            <consortium name="NIH - Xenopus Gene Collection (XGC) project"/>
        </authorList>
    </citation>
    <scope>NUCLEOTIDE SEQUENCE [LARGE SCALE MRNA]</scope>
</reference>
<proteinExistence type="evidence at protein level"/>
<sequence>MHRSESSYCREETTLCQGVNSTWVPPADTVPEVSLIPSSPPAPDSPAPSPKPGYGFSTCEEKHGDPRIRRPMNAFMVWAKDERKRLAQQNPDLHNAVLSKMLGQSWKNLTSVEKRPFVEEAERLRVQHLQDHPNYKYRPRRKKQAKKLKRMDPSPLLRNEGFTRGQPMVNLSHFRNLHPLGGSGELESYGLPTPEMSPLDVLEPSEPAFFPPHMREDTDPVPFRTYQHGMDFSQEKTMREISLPYSSSPSHMGSFLRTPTPSAFYYKAHGGSPVCTPLGQLSPPPEAPALDAMDHLNQAELWGDFDRNEFDQYLNMSRTQRPGYSFPMSKLGAPRTIPCEENSLISALSDASTAMYYTPCITG</sequence>
<comment type="function">
    <text evidence="3 7">Probable transcription factor. Binds to the consensus DNA sequence 5'-AACAAT-3'. Also binds 5'-CACAAT-3' and 5'-AATAAT-3' with similar affinity.</text>
</comment>
<comment type="subcellular location">
    <subcellularLocation>
        <location evidence="4">Nucleus</location>
    </subcellularLocation>
</comment>
<comment type="tissue specificity">
    <text evidence="7">Expressed in the adult spleen, lung, heart and kidney, and at a lower level in the adult testis, liver and brain.</text>
</comment>
<comment type="developmental stage">
    <text evidence="7">Expressed in adults but not in embryos.</text>
</comment>
<comment type="domain">
    <text evidence="2">Binds target DNA via the HMG box domain.</text>
</comment>
<comment type="domain">
    <text evidence="1">The 9aaTAD motif is a transactivation domain present in a large number of yeast and animal transcription factors.</text>
</comment>
<organism>
    <name type="scientific">Xenopus laevis</name>
    <name type="common">African clawed frog</name>
    <dbReference type="NCBI Taxonomy" id="8355"/>
    <lineage>
        <taxon>Eukaryota</taxon>
        <taxon>Metazoa</taxon>
        <taxon>Chordata</taxon>
        <taxon>Craniata</taxon>
        <taxon>Vertebrata</taxon>
        <taxon>Euteleostomi</taxon>
        <taxon>Amphibia</taxon>
        <taxon>Batrachia</taxon>
        <taxon>Anura</taxon>
        <taxon>Pipoidea</taxon>
        <taxon>Pipidae</taxon>
        <taxon>Xenopodinae</taxon>
        <taxon>Xenopus</taxon>
        <taxon>Xenopus</taxon>
    </lineage>
</organism>
<keyword id="KW-0238">DNA-binding</keyword>
<keyword id="KW-0539">Nucleus</keyword>
<keyword id="KW-1185">Reference proteome</keyword>
<keyword id="KW-0804">Transcription</keyword>
<keyword id="KW-0805">Transcription regulation</keyword>
<dbReference type="EMBL" id="AB052692">
    <property type="protein sequence ID" value="BAB60829.1"/>
    <property type="molecule type" value="mRNA"/>
</dbReference>
<dbReference type="EMBL" id="BC169575">
    <property type="protein sequence ID" value="AAI69575.1"/>
    <property type="molecule type" value="mRNA"/>
</dbReference>
<dbReference type="RefSeq" id="NP_001082102.1">
    <property type="nucleotide sequence ID" value="NM_001088633.1"/>
</dbReference>
<dbReference type="GeneID" id="398226"/>
<dbReference type="KEGG" id="xla:398226"/>
<dbReference type="AGR" id="Xenbase:XB-GENE-864957"/>
<dbReference type="CTD" id="398226"/>
<dbReference type="Xenbase" id="XB-GENE-864957">
    <property type="gene designation" value="sox18.L"/>
</dbReference>
<dbReference type="OMA" id="FSMSHHG"/>
<dbReference type="OrthoDB" id="1919336at2759"/>
<dbReference type="Proteomes" id="UP000186698">
    <property type="component" value="Chromosome 9_10L"/>
</dbReference>
<dbReference type="Bgee" id="398226">
    <property type="expression patterns" value="Expressed in lung and 15 other cell types or tissues"/>
</dbReference>
<dbReference type="GO" id="GO:0005634">
    <property type="term" value="C:nucleus"/>
    <property type="evidence" value="ECO:0000250"/>
    <property type="project" value="UniProtKB"/>
</dbReference>
<dbReference type="GO" id="GO:0001228">
    <property type="term" value="F:DNA-binding transcription activator activity, RNA polymerase II-specific"/>
    <property type="evidence" value="ECO:0000318"/>
    <property type="project" value="GO_Central"/>
</dbReference>
<dbReference type="GO" id="GO:0000978">
    <property type="term" value="F:RNA polymerase II cis-regulatory region sequence-specific DNA binding"/>
    <property type="evidence" value="ECO:0000318"/>
    <property type="project" value="GO_Central"/>
</dbReference>
<dbReference type="GO" id="GO:0043565">
    <property type="term" value="F:sequence-specific DNA binding"/>
    <property type="evidence" value="ECO:0000314"/>
    <property type="project" value="UniProtKB"/>
</dbReference>
<dbReference type="GO" id="GO:0001525">
    <property type="term" value="P:angiogenesis"/>
    <property type="evidence" value="ECO:0000318"/>
    <property type="project" value="GO_Central"/>
</dbReference>
<dbReference type="GO" id="GO:0007507">
    <property type="term" value="P:heart development"/>
    <property type="evidence" value="ECO:0000315"/>
    <property type="project" value="Xenbase"/>
</dbReference>
<dbReference type="GO" id="GO:0001946">
    <property type="term" value="P:lymphangiogenesis"/>
    <property type="evidence" value="ECO:0000318"/>
    <property type="project" value="GO_Central"/>
</dbReference>
<dbReference type="GO" id="GO:0045944">
    <property type="term" value="P:positive regulation of transcription by RNA polymerase II"/>
    <property type="evidence" value="ECO:0000318"/>
    <property type="project" value="GO_Central"/>
</dbReference>
<dbReference type="GO" id="GO:0001570">
    <property type="term" value="P:vasculogenesis"/>
    <property type="evidence" value="ECO:0000318"/>
    <property type="project" value="GO_Central"/>
</dbReference>
<dbReference type="CDD" id="cd22048">
    <property type="entry name" value="HMG-box_SoxF_SOX18"/>
    <property type="match status" value="1"/>
</dbReference>
<dbReference type="FunFam" id="1.10.30.10:FF:000008">
    <property type="entry name" value="transcription factor SOX-7"/>
    <property type="match status" value="1"/>
</dbReference>
<dbReference type="Gene3D" id="1.10.30.10">
    <property type="entry name" value="High mobility group box domain"/>
    <property type="match status" value="1"/>
</dbReference>
<dbReference type="InterPro" id="IPR009071">
    <property type="entry name" value="HMG_box_dom"/>
</dbReference>
<dbReference type="InterPro" id="IPR036910">
    <property type="entry name" value="HMG_box_dom_sf"/>
</dbReference>
<dbReference type="InterPro" id="IPR033392">
    <property type="entry name" value="Sox7/17/18_central"/>
</dbReference>
<dbReference type="InterPro" id="IPR021934">
    <property type="entry name" value="Sox_C"/>
</dbReference>
<dbReference type="InterPro" id="IPR050140">
    <property type="entry name" value="SRY-related_HMG-box_TF-like"/>
</dbReference>
<dbReference type="PANTHER" id="PTHR10270">
    <property type="entry name" value="SOX TRANSCRIPTION FACTOR"/>
    <property type="match status" value="1"/>
</dbReference>
<dbReference type="PANTHER" id="PTHR10270:SF204">
    <property type="entry name" value="TRANSCRIPTION FACTOR SOX-18"/>
    <property type="match status" value="1"/>
</dbReference>
<dbReference type="Pfam" id="PF00505">
    <property type="entry name" value="HMG_box"/>
    <property type="match status" value="1"/>
</dbReference>
<dbReference type="Pfam" id="PF12067">
    <property type="entry name" value="Sox17_18_mid"/>
    <property type="match status" value="1"/>
</dbReference>
<dbReference type="SMART" id="SM00398">
    <property type="entry name" value="HMG"/>
    <property type="match status" value="1"/>
</dbReference>
<dbReference type="SUPFAM" id="SSF47095">
    <property type="entry name" value="HMG-box"/>
    <property type="match status" value="1"/>
</dbReference>
<dbReference type="PROSITE" id="PS50118">
    <property type="entry name" value="HMG_BOX_2"/>
    <property type="match status" value="1"/>
</dbReference>
<dbReference type="PROSITE" id="PS51516">
    <property type="entry name" value="SOX_C"/>
    <property type="match status" value="1"/>
</dbReference>
<protein>
    <recommendedName>
        <fullName>Transcription factor Sox-18A</fullName>
        <shortName evidence="8">xSox18alpha</shortName>
    </recommendedName>
    <alternativeName>
        <fullName>SRY (sex determining region Y)-box 18A</fullName>
    </alternativeName>
</protein>
<accession>Q90ZH8</accession>
<name>SX18A_XENLA</name>
<gene>
    <name type="primary">sox18-a</name>
    <name type="synonym">sox18</name>
</gene>